<feature type="chain" id="PRO_0000085897" description="Casein kinase II subunit alpha-3">
    <location>
        <begin position="1"/>
        <end position="333"/>
    </location>
</feature>
<feature type="domain" description="Protein kinase" evidence="2">
    <location>
        <begin position="34"/>
        <end position="319"/>
    </location>
</feature>
<feature type="active site" description="Proton acceptor" evidence="2 3">
    <location>
        <position position="151"/>
    </location>
</feature>
<feature type="binding site" evidence="2">
    <location>
        <begin position="40"/>
        <end position="48"/>
    </location>
    <ligand>
        <name>ATP</name>
        <dbReference type="ChEBI" id="CHEBI:30616"/>
    </ligand>
</feature>
<feature type="binding site" evidence="2">
    <location>
        <position position="63"/>
    </location>
    <ligand>
        <name>ATP</name>
        <dbReference type="ChEBI" id="CHEBI:30616"/>
    </ligand>
</feature>
<feature type="splice variant" id="VSP_043761" description="In isoform 2." evidence="7">
    <original>AIDFLDKLLQYDHQDR</original>
    <variation>VLLFFEKHSFASFWVY</variation>
    <location>
        <begin position="292"/>
        <end position="307"/>
    </location>
</feature>
<feature type="splice variant" id="VSP_043762" description="In isoform 2." evidence="7">
    <location>
        <begin position="308"/>
        <end position="333"/>
    </location>
</feature>
<name>CSK23_ARATH</name>
<gene>
    <name evidence="8" type="primary">CKA3</name>
    <name type="ordered locus">At2g23080</name>
    <name type="ORF">F21P24.14</name>
</gene>
<keyword id="KW-0025">Alternative splicing</keyword>
<keyword id="KW-0067">ATP-binding</keyword>
<keyword id="KW-0963">Cytoplasm</keyword>
<keyword id="KW-0418">Kinase</keyword>
<keyword id="KW-0547">Nucleotide-binding</keyword>
<keyword id="KW-0539">Nucleus</keyword>
<keyword id="KW-1185">Reference proteome</keyword>
<keyword id="KW-0723">Serine/threonine-protein kinase</keyword>
<keyword id="KW-0808">Transferase</keyword>
<evidence type="ECO:0000250" key="1">
    <source>
        <dbReference type="UniProtKB" id="Q08467"/>
    </source>
</evidence>
<evidence type="ECO:0000255" key="2">
    <source>
        <dbReference type="PROSITE-ProRule" id="PRU00159"/>
    </source>
</evidence>
<evidence type="ECO:0000255" key="3">
    <source>
        <dbReference type="PROSITE-ProRule" id="PRU10027"/>
    </source>
</evidence>
<evidence type="ECO:0000269" key="4">
    <source>
    </source>
</evidence>
<evidence type="ECO:0000269" key="5">
    <source>
    </source>
</evidence>
<evidence type="ECO:0000269" key="6">
    <source>
    </source>
</evidence>
<evidence type="ECO:0000303" key="7">
    <source>
    </source>
</evidence>
<evidence type="ECO:0000305" key="8"/>
<sequence>MSKARVYTDVNVVRPKEYWDYESLVVQWGHQDDYEVVRKVGRGKYSEVFEGKNVNTNERCVIKILKPVKKKKIKREIKILQNLCGGPNIVKLYDIVRDEHSKTPSLVFEFVNSVDFKVLYPTLTDYDIRYYIYELLKALDFCHSQGIMHRDVKPHNVMIDHQLRKLRLIDWGLAEFYHPGKEYNVRVASRYFKGPELLVDLQDYDYSLDMWSLGCMFAGMIFRKEPFFYGHDNHDQLVKIAKVLGTNELDHYLNKYQLDLDPQLEALVGRHVPKPWSKFINADNQHLVSPEAIDFLDKLLQYDHQDRLTAREAMDHPYFAQVKAAESSRLRTQ</sequence>
<comment type="function">
    <text evidence="1 6">Casein kinases are operationally defined by their preferential utilization of acidic proteins such as caseins as substrates. The alpha chain contains the catalytic site. The tetrameric holoenzyme CK2 is composed of two alpha and two beta subunits (By similarity). Acts as a circadian clock component that maintains the correct period length through phosphorylation of CCA1 (PubMed:21900482).</text>
</comment>
<comment type="catalytic activity">
    <reaction>
        <text>L-seryl-[protein] + ATP = O-phospho-L-seryl-[protein] + ADP + H(+)</text>
        <dbReference type="Rhea" id="RHEA:17989"/>
        <dbReference type="Rhea" id="RHEA-COMP:9863"/>
        <dbReference type="Rhea" id="RHEA-COMP:11604"/>
        <dbReference type="ChEBI" id="CHEBI:15378"/>
        <dbReference type="ChEBI" id="CHEBI:29999"/>
        <dbReference type="ChEBI" id="CHEBI:30616"/>
        <dbReference type="ChEBI" id="CHEBI:83421"/>
        <dbReference type="ChEBI" id="CHEBI:456216"/>
        <dbReference type="EC" id="2.7.11.1"/>
    </reaction>
</comment>
<comment type="catalytic activity">
    <reaction>
        <text>L-threonyl-[protein] + ATP = O-phospho-L-threonyl-[protein] + ADP + H(+)</text>
        <dbReference type="Rhea" id="RHEA:46608"/>
        <dbReference type="Rhea" id="RHEA-COMP:11060"/>
        <dbReference type="Rhea" id="RHEA-COMP:11605"/>
        <dbReference type="ChEBI" id="CHEBI:15378"/>
        <dbReference type="ChEBI" id="CHEBI:30013"/>
        <dbReference type="ChEBI" id="CHEBI:30616"/>
        <dbReference type="ChEBI" id="CHEBI:61977"/>
        <dbReference type="ChEBI" id="CHEBI:456216"/>
        <dbReference type="EC" id="2.7.11.1"/>
    </reaction>
</comment>
<comment type="subunit">
    <text evidence="8">Heterotetramer of two catalytic alpha subunits and two regulatory beta subunits.</text>
</comment>
<comment type="interaction">
    <interactant intactId="EBI-1235683">
        <id>O64817</id>
    </interactant>
    <interactant intactId="EBI-1235664">
        <id>P25854</id>
        <label>CAM4</label>
    </interactant>
    <organismsDiffer>false</organismsDiffer>
    <experiments>2</experiments>
</comment>
<comment type="subcellular location">
    <subcellularLocation>
        <location evidence="4 5">Nucleus</location>
    </subcellularLocation>
    <subcellularLocation>
        <location evidence="4">Nucleus</location>
        <location evidence="4">Nucleolus</location>
    </subcellularLocation>
    <subcellularLocation>
        <location evidence="5">Cytoplasm</location>
    </subcellularLocation>
</comment>
<comment type="alternative products">
    <event type="alternative splicing"/>
    <isoform>
        <id>O64817-1</id>
        <name>1</name>
        <sequence type="displayed"/>
    </isoform>
    <isoform>
        <id>O64817-2</id>
        <name>2</name>
        <sequence type="described" ref="VSP_043761 VSP_043762"/>
    </isoform>
</comment>
<comment type="disruption phenotype">
    <text evidence="6">No visible phenotype under normal growth conditions, but the triple mutant cka1, cka2 and cka3 show altered circadian rhythms and delayed flowering under long day conditions.</text>
</comment>
<comment type="similarity">
    <text evidence="2">Belongs to the protein kinase superfamily. Ser/Thr protein kinase family. CK2 subfamily.</text>
</comment>
<accession>O64817</accession>
<accession>F4ILF5</accession>
<accession>Q8L5T7</accession>
<reference key="1">
    <citation type="journal article" date="1999" name="Nature">
        <title>Sequence and analysis of chromosome 2 of the plant Arabidopsis thaliana.</title>
        <authorList>
            <person name="Lin X."/>
            <person name="Kaul S."/>
            <person name="Rounsley S.D."/>
            <person name="Shea T.P."/>
            <person name="Benito M.-I."/>
            <person name="Town C.D."/>
            <person name="Fujii C.Y."/>
            <person name="Mason T.M."/>
            <person name="Bowman C.L."/>
            <person name="Barnstead M.E."/>
            <person name="Feldblyum T.V."/>
            <person name="Buell C.R."/>
            <person name="Ketchum K.A."/>
            <person name="Lee J.J."/>
            <person name="Ronning C.M."/>
            <person name="Koo H.L."/>
            <person name="Moffat K.S."/>
            <person name="Cronin L.A."/>
            <person name="Shen M."/>
            <person name="Pai G."/>
            <person name="Van Aken S."/>
            <person name="Umayam L."/>
            <person name="Tallon L.J."/>
            <person name="Gill J.E."/>
            <person name="Adams M.D."/>
            <person name="Carrera A.J."/>
            <person name="Creasy T.H."/>
            <person name="Goodman H.M."/>
            <person name="Somerville C.R."/>
            <person name="Copenhaver G.P."/>
            <person name="Preuss D."/>
            <person name="Nierman W.C."/>
            <person name="White O."/>
            <person name="Eisen J.A."/>
            <person name="Salzberg S.L."/>
            <person name="Fraser C.M."/>
            <person name="Venter J.C."/>
        </authorList>
    </citation>
    <scope>NUCLEOTIDE SEQUENCE [LARGE SCALE GENOMIC DNA]</scope>
    <source>
        <strain>cv. Columbia</strain>
    </source>
</reference>
<reference key="2">
    <citation type="journal article" date="2017" name="Plant J.">
        <title>Araport11: a complete reannotation of the Arabidopsis thaliana reference genome.</title>
        <authorList>
            <person name="Cheng C.Y."/>
            <person name="Krishnakumar V."/>
            <person name="Chan A.P."/>
            <person name="Thibaud-Nissen F."/>
            <person name="Schobel S."/>
            <person name="Town C.D."/>
        </authorList>
    </citation>
    <scope>GENOME REANNOTATION</scope>
    <source>
        <strain>cv. Columbia</strain>
    </source>
</reference>
<reference key="3">
    <citation type="journal article" date="2003" name="Science">
        <title>Empirical analysis of transcriptional activity in the Arabidopsis genome.</title>
        <authorList>
            <person name="Yamada K."/>
            <person name="Lim J."/>
            <person name="Dale J.M."/>
            <person name="Chen H."/>
            <person name="Shinn P."/>
            <person name="Palm C.J."/>
            <person name="Southwick A.M."/>
            <person name="Wu H.C."/>
            <person name="Kim C.J."/>
            <person name="Nguyen M."/>
            <person name="Pham P.K."/>
            <person name="Cheuk R.F."/>
            <person name="Karlin-Newmann G."/>
            <person name="Liu S.X."/>
            <person name="Lam B."/>
            <person name="Sakano H."/>
            <person name="Wu T."/>
            <person name="Yu G."/>
            <person name="Miranda M."/>
            <person name="Quach H.L."/>
            <person name="Tripp M."/>
            <person name="Chang C.H."/>
            <person name="Lee J.M."/>
            <person name="Toriumi M.J."/>
            <person name="Chan M.M."/>
            <person name="Tang C.C."/>
            <person name="Onodera C.S."/>
            <person name="Deng J.M."/>
            <person name="Akiyama K."/>
            <person name="Ansari Y."/>
            <person name="Arakawa T."/>
            <person name="Banh J."/>
            <person name="Banno F."/>
            <person name="Bowser L."/>
            <person name="Brooks S.Y."/>
            <person name="Carninci P."/>
            <person name="Chao Q."/>
            <person name="Choy N."/>
            <person name="Enju A."/>
            <person name="Goldsmith A.D."/>
            <person name="Gurjal M."/>
            <person name="Hansen N.F."/>
            <person name="Hayashizaki Y."/>
            <person name="Johnson-Hopson C."/>
            <person name="Hsuan V.W."/>
            <person name="Iida K."/>
            <person name="Karnes M."/>
            <person name="Khan S."/>
            <person name="Koesema E."/>
            <person name="Ishida J."/>
            <person name="Jiang P.X."/>
            <person name="Jones T."/>
            <person name="Kawai J."/>
            <person name="Kamiya A."/>
            <person name="Meyers C."/>
            <person name="Nakajima M."/>
            <person name="Narusaka M."/>
            <person name="Seki M."/>
            <person name="Sakurai T."/>
            <person name="Satou M."/>
            <person name="Tamse R."/>
            <person name="Vaysberg M."/>
            <person name="Wallender E.K."/>
            <person name="Wong C."/>
            <person name="Yamamura Y."/>
            <person name="Yuan S."/>
            <person name="Shinozaki K."/>
            <person name="Davis R.W."/>
            <person name="Theologis A."/>
            <person name="Ecker J.R."/>
        </authorList>
    </citation>
    <scope>NUCLEOTIDE SEQUENCE [LARGE SCALE MRNA] (ISOFORM 1)</scope>
    <source>
        <strain>cv. Columbia</strain>
    </source>
</reference>
<reference key="4">
    <citation type="journal article" date="2004" name="Genome Res.">
        <title>Whole genome sequence comparisons and 'full-length' cDNA sequences: a combined approach to evaluate and improve Arabidopsis genome annotation.</title>
        <authorList>
            <person name="Castelli V."/>
            <person name="Aury J.-M."/>
            <person name="Jaillon O."/>
            <person name="Wincker P."/>
            <person name="Clepet C."/>
            <person name="Menard M."/>
            <person name="Cruaud C."/>
            <person name="Quetier F."/>
            <person name="Scarpelli C."/>
            <person name="Schaechter V."/>
            <person name="Temple G."/>
            <person name="Caboche M."/>
            <person name="Weissenbach J."/>
            <person name="Salanoubat M."/>
        </authorList>
    </citation>
    <scope>NUCLEOTIDE SEQUENCE [LARGE SCALE MRNA] (ISOFORM 2)</scope>
    <source>
        <strain>cv. Columbia</strain>
    </source>
</reference>
<reference key="5">
    <citation type="submission" date="2002-03" db="EMBL/GenBank/DDBJ databases">
        <title>Full-length cDNA from Arabidopsis thaliana.</title>
        <authorList>
            <person name="Brover V.V."/>
            <person name="Troukhan M.E."/>
            <person name="Alexandrov N.A."/>
            <person name="Lu Y.-P."/>
            <person name="Flavell R.B."/>
            <person name="Feldmann K.A."/>
        </authorList>
    </citation>
    <scope>NUCLEOTIDE SEQUENCE [LARGE SCALE MRNA] (ISOFORM 1)</scope>
</reference>
<reference key="6">
    <citation type="journal article" date="2006" name="Plant Cell Physiol.">
        <title>An extensive survey of CK2 alpha and beta subunits in Arabidopsis: multiple isoforms exhibit differential subcellular localization.</title>
        <authorList>
            <person name="Salinas P."/>
            <person name="Fuentes D."/>
            <person name="Vidal E."/>
            <person name="Jordana X."/>
            <person name="Echeverria M."/>
            <person name="Holuigue L."/>
        </authorList>
    </citation>
    <scope>SUBCELLULAR LOCATION</scope>
</reference>
<reference key="7">
    <citation type="journal article" date="2011" name="Mol. Cell. Biochem.">
        <title>The p23 co-chaperone protein is a novel substrate of CK2 in Arabidopsis.</title>
        <authorList>
            <person name="Tosoni K."/>
            <person name="Costa A."/>
            <person name="Sarno S."/>
            <person name="D'Alessandro S."/>
            <person name="Sparla F."/>
            <person name="Pinna L.A."/>
            <person name="Zottini M."/>
            <person name="Ruzzene M."/>
        </authorList>
    </citation>
    <scope>SUBCELLULAR LOCATION</scope>
</reference>
<reference key="8">
    <citation type="journal article" date="2011" name="Plant Physiol.">
        <title>A role for protein kinase casein kinase2 alpha-subunits in the Arabidopsis circadian clock.</title>
        <authorList>
            <person name="Lu S.X."/>
            <person name="Liu H."/>
            <person name="Knowles S.M."/>
            <person name="Li J."/>
            <person name="Ma L."/>
            <person name="Tobin E.M."/>
            <person name="Lin C."/>
        </authorList>
    </citation>
    <scope>FUNCTION</scope>
    <scope>DISRUPTION PHENOTYPE</scope>
</reference>
<protein>
    <recommendedName>
        <fullName evidence="8">Casein kinase II subunit alpha-3</fullName>
        <shortName>CK II</shortName>
        <ecNumber>2.7.11.1</ecNumber>
    </recommendedName>
</protein>
<dbReference type="EC" id="2.7.11.1"/>
<dbReference type="EMBL" id="AC004401">
    <property type="protein sequence ID" value="AAC17824.1"/>
    <property type="molecule type" value="Genomic_DNA"/>
</dbReference>
<dbReference type="EMBL" id="CP002685">
    <property type="protein sequence ID" value="AEC07405.1"/>
    <property type="molecule type" value="Genomic_DNA"/>
</dbReference>
<dbReference type="EMBL" id="CP002685">
    <property type="protein sequence ID" value="AEC07406.1"/>
    <property type="molecule type" value="Genomic_DNA"/>
</dbReference>
<dbReference type="EMBL" id="AY035088">
    <property type="protein sequence ID" value="AAK59593.1"/>
    <property type="molecule type" value="mRNA"/>
</dbReference>
<dbReference type="EMBL" id="AY062954">
    <property type="protein sequence ID" value="AAL33786.1"/>
    <property type="molecule type" value="mRNA"/>
</dbReference>
<dbReference type="EMBL" id="BX819262">
    <property type="status" value="NOT_ANNOTATED_CDS"/>
    <property type="molecule type" value="mRNA"/>
</dbReference>
<dbReference type="EMBL" id="AY087736">
    <property type="protein sequence ID" value="AAM65273.1"/>
    <property type="molecule type" value="mRNA"/>
</dbReference>
<dbReference type="PIR" id="C84620">
    <property type="entry name" value="C84620"/>
</dbReference>
<dbReference type="RefSeq" id="NP_179890.1">
    <molecule id="O64817-1"/>
    <property type="nucleotide sequence ID" value="NM_127872.4"/>
</dbReference>
<dbReference type="RefSeq" id="NP_973518.1">
    <molecule id="O64817-2"/>
    <property type="nucleotide sequence ID" value="NM_201789.2"/>
</dbReference>
<dbReference type="SMR" id="O64817"/>
<dbReference type="BioGRID" id="2191">
    <property type="interactions" value="28"/>
</dbReference>
<dbReference type="FunCoup" id="O64817">
    <property type="interactions" value="4228"/>
</dbReference>
<dbReference type="IntAct" id="O64817">
    <property type="interactions" value="8"/>
</dbReference>
<dbReference type="STRING" id="3702.O64817"/>
<dbReference type="iPTMnet" id="O64817"/>
<dbReference type="PaxDb" id="3702-AT2G23080.1"/>
<dbReference type="ProteomicsDB" id="224424">
    <molecule id="O64817-1"/>
</dbReference>
<dbReference type="EnsemblPlants" id="AT2G23080.1">
    <molecule id="O64817-1"/>
    <property type="protein sequence ID" value="AT2G23080.1"/>
    <property type="gene ID" value="AT2G23080"/>
</dbReference>
<dbReference type="EnsemblPlants" id="AT2G23080.2">
    <molecule id="O64817-2"/>
    <property type="protein sequence ID" value="AT2G23080.2"/>
    <property type="gene ID" value="AT2G23080"/>
</dbReference>
<dbReference type="GeneID" id="816838"/>
<dbReference type="Gramene" id="AT2G23080.1">
    <molecule id="O64817-1"/>
    <property type="protein sequence ID" value="AT2G23080.1"/>
    <property type="gene ID" value="AT2G23080"/>
</dbReference>
<dbReference type="Gramene" id="AT2G23080.2">
    <molecule id="O64817-2"/>
    <property type="protein sequence ID" value="AT2G23080.2"/>
    <property type="gene ID" value="AT2G23080"/>
</dbReference>
<dbReference type="KEGG" id="ath:AT2G23080"/>
<dbReference type="Araport" id="AT2G23080"/>
<dbReference type="TAIR" id="AT2G23080">
    <property type="gene designation" value="CKA3"/>
</dbReference>
<dbReference type="eggNOG" id="KOG0668">
    <property type="taxonomic scope" value="Eukaryota"/>
</dbReference>
<dbReference type="HOGENOM" id="CLU_000288_70_4_1"/>
<dbReference type="InParanoid" id="O64817"/>
<dbReference type="OMA" id="VITIVHQ"/>
<dbReference type="OrthoDB" id="10254671at2759"/>
<dbReference type="PhylomeDB" id="O64817"/>
<dbReference type="PRO" id="PR:O64817"/>
<dbReference type="Proteomes" id="UP000006548">
    <property type="component" value="Chromosome 2"/>
</dbReference>
<dbReference type="ExpressionAtlas" id="O64817">
    <property type="expression patterns" value="baseline and differential"/>
</dbReference>
<dbReference type="GO" id="GO:0005737">
    <property type="term" value="C:cytoplasm"/>
    <property type="evidence" value="ECO:0000314"/>
    <property type="project" value="UniProtKB"/>
</dbReference>
<dbReference type="GO" id="GO:0005730">
    <property type="term" value="C:nucleolus"/>
    <property type="evidence" value="ECO:0000314"/>
    <property type="project" value="UniProtKB"/>
</dbReference>
<dbReference type="GO" id="GO:0005634">
    <property type="term" value="C:nucleus"/>
    <property type="evidence" value="ECO:0000314"/>
    <property type="project" value="UniProtKB"/>
</dbReference>
<dbReference type="GO" id="GO:0005524">
    <property type="term" value="F:ATP binding"/>
    <property type="evidence" value="ECO:0007669"/>
    <property type="project" value="UniProtKB-KW"/>
</dbReference>
<dbReference type="GO" id="GO:0106310">
    <property type="term" value="F:protein serine kinase activity"/>
    <property type="evidence" value="ECO:0007669"/>
    <property type="project" value="RHEA"/>
</dbReference>
<dbReference type="GO" id="GO:0004674">
    <property type="term" value="F:protein serine/threonine kinase activity"/>
    <property type="evidence" value="ECO:0007669"/>
    <property type="project" value="UniProtKB-KW"/>
</dbReference>
<dbReference type="GO" id="GO:0006325">
    <property type="term" value="P:chromatin organization"/>
    <property type="evidence" value="ECO:0000314"/>
    <property type="project" value="TAIR"/>
</dbReference>
<dbReference type="GO" id="GO:0007623">
    <property type="term" value="P:circadian rhythm"/>
    <property type="evidence" value="ECO:0000316"/>
    <property type="project" value="TAIR"/>
</dbReference>
<dbReference type="GO" id="GO:0006281">
    <property type="term" value="P:DNA repair"/>
    <property type="evidence" value="ECO:0000314"/>
    <property type="project" value="TAIR"/>
</dbReference>
<dbReference type="GO" id="GO:0051726">
    <property type="term" value="P:regulation of cell cycle"/>
    <property type="evidence" value="ECO:0000270"/>
    <property type="project" value="TAIR"/>
</dbReference>
<dbReference type="GO" id="GO:0042752">
    <property type="term" value="P:regulation of circadian rhythm"/>
    <property type="evidence" value="ECO:0000315"/>
    <property type="project" value="UniProtKB"/>
</dbReference>
<dbReference type="GO" id="GO:0010332">
    <property type="term" value="P:response to gamma radiation"/>
    <property type="evidence" value="ECO:0000315"/>
    <property type="project" value="TAIR"/>
</dbReference>
<dbReference type="GO" id="GO:0010225">
    <property type="term" value="P:response to UV-C"/>
    <property type="evidence" value="ECO:0000315"/>
    <property type="project" value="TAIR"/>
</dbReference>
<dbReference type="CDD" id="cd14132">
    <property type="entry name" value="STKc_CK2_alpha"/>
    <property type="match status" value="1"/>
</dbReference>
<dbReference type="FunFam" id="1.10.510.10:FF:000059">
    <property type="entry name" value="Casein kinase II subunit alpha"/>
    <property type="match status" value="1"/>
</dbReference>
<dbReference type="FunFam" id="3.30.200.20:FF:000088">
    <property type="entry name" value="Casein kinase II subunit alpha"/>
    <property type="match status" value="1"/>
</dbReference>
<dbReference type="Gene3D" id="3.30.200.20">
    <property type="entry name" value="Phosphorylase Kinase, domain 1"/>
    <property type="match status" value="1"/>
</dbReference>
<dbReference type="Gene3D" id="1.10.510.10">
    <property type="entry name" value="Transferase(Phosphotransferase) domain 1"/>
    <property type="match status" value="1"/>
</dbReference>
<dbReference type="InterPro" id="IPR045216">
    <property type="entry name" value="CK2_alpha"/>
</dbReference>
<dbReference type="InterPro" id="IPR011009">
    <property type="entry name" value="Kinase-like_dom_sf"/>
</dbReference>
<dbReference type="InterPro" id="IPR000719">
    <property type="entry name" value="Prot_kinase_dom"/>
</dbReference>
<dbReference type="InterPro" id="IPR017441">
    <property type="entry name" value="Protein_kinase_ATP_BS"/>
</dbReference>
<dbReference type="InterPro" id="IPR008271">
    <property type="entry name" value="Ser/Thr_kinase_AS"/>
</dbReference>
<dbReference type="PANTHER" id="PTHR24054">
    <property type="entry name" value="CASEIN KINASE II SUBUNIT ALPHA"/>
    <property type="match status" value="1"/>
</dbReference>
<dbReference type="PANTHER" id="PTHR24054:SF59">
    <property type="entry name" value="CASEIN KINASE II SUBUNIT ALPHA-3"/>
    <property type="match status" value="1"/>
</dbReference>
<dbReference type="Pfam" id="PF00069">
    <property type="entry name" value="Pkinase"/>
    <property type="match status" value="1"/>
</dbReference>
<dbReference type="SMART" id="SM00220">
    <property type="entry name" value="S_TKc"/>
    <property type="match status" value="1"/>
</dbReference>
<dbReference type="SUPFAM" id="SSF56112">
    <property type="entry name" value="Protein kinase-like (PK-like)"/>
    <property type="match status" value="1"/>
</dbReference>
<dbReference type="PROSITE" id="PS00107">
    <property type="entry name" value="PROTEIN_KINASE_ATP"/>
    <property type="match status" value="1"/>
</dbReference>
<dbReference type="PROSITE" id="PS50011">
    <property type="entry name" value="PROTEIN_KINASE_DOM"/>
    <property type="match status" value="1"/>
</dbReference>
<dbReference type="PROSITE" id="PS00108">
    <property type="entry name" value="PROTEIN_KINASE_ST"/>
    <property type="match status" value="1"/>
</dbReference>
<proteinExistence type="evidence at protein level"/>
<organism>
    <name type="scientific">Arabidopsis thaliana</name>
    <name type="common">Mouse-ear cress</name>
    <dbReference type="NCBI Taxonomy" id="3702"/>
    <lineage>
        <taxon>Eukaryota</taxon>
        <taxon>Viridiplantae</taxon>
        <taxon>Streptophyta</taxon>
        <taxon>Embryophyta</taxon>
        <taxon>Tracheophyta</taxon>
        <taxon>Spermatophyta</taxon>
        <taxon>Magnoliopsida</taxon>
        <taxon>eudicotyledons</taxon>
        <taxon>Gunneridae</taxon>
        <taxon>Pentapetalae</taxon>
        <taxon>rosids</taxon>
        <taxon>malvids</taxon>
        <taxon>Brassicales</taxon>
        <taxon>Brassicaceae</taxon>
        <taxon>Camelineae</taxon>
        <taxon>Arabidopsis</taxon>
    </lineage>
</organism>